<dbReference type="EC" id="3.6.1.1" evidence="1"/>
<dbReference type="EMBL" id="BA000028">
    <property type="protein sequence ID" value="BAC14435.1"/>
    <property type="molecule type" value="Genomic_DNA"/>
</dbReference>
<dbReference type="RefSeq" id="WP_011066872.1">
    <property type="nucleotide sequence ID" value="NC_004193.1"/>
</dbReference>
<dbReference type="SMR" id="Q8ENK3"/>
<dbReference type="STRING" id="221109.gene:10734731"/>
<dbReference type="KEGG" id="oih:OB2479"/>
<dbReference type="eggNOG" id="COG0546">
    <property type="taxonomic scope" value="Bacteria"/>
</dbReference>
<dbReference type="HOGENOM" id="CLU_045011_19_3_9"/>
<dbReference type="OrthoDB" id="9807630at2"/>
<dbReference type="PhylomeDB" id="Q8ENK3"/>
<dbReference type="Proteomes" id="UP000000822">
    <property type="component" value="Chromosome"/>
</dbReference>
<dbReference type="GO" id="GO:0005829">
    <property type="term" value="C:cytosol"/>
    <property type="evidence" value="ECO:0007669"/>
    <property type="project" value="TreeGrafter"/>
</dbReference>
<dbReference type="GO" id="GO:0004427">
    <property type="term" value="F:inorganic diphosphate phosphatase activity"/>
    <property type="evidence" value="ECO:0007669"/>
    <property type="project" value="UniProtKB-UniRule"/>
</dbReference>
<dbReference type="GO" id="GO:0000287">
    <property type="term" value="F:magnesium ion binding"/>
    <property type="evidence" value="ECO:0007669"/>
    <property type="project" value="UniProtKB-UniRule"/>
</dbReference>
<dbReference type="GO" id="GO:0008967">
    <property type="term" value="F:phosphoglycolate phosphatase activity"/>
    <property type="evidence" value="ECO:0007669"/>
    <property type="project" value="TreeGrafter"/>
</dbReference>
<dbReference type="GO" id="GO:0006281">
    <property type="term" value="P:DNA repair"/>
    <property type="evidence" value="ECO:0007669"/>
    <property type="project" value="TreeGrafter"/>
</dbReference>
<dbReference type="CDD" id="cd02616">
    <property type="entry name" value="HAD_PPase"/>
    <property type="match status" value="1"/>
</dbReference>
<dbReference type="FunFam" id="3.40.50.1000:FF:000022">
    <property type="entry name" value="Phosphoglycolate phosphatase"/>
    <property type="match status" value="1"/>
</dbReference>
<dbReference type="Gene3D" id="3.40.50.1000">
    <property type="entry name" value="HAD superfamily/HAD-like"/>
    <property type="match status" value="1"/>
</dbReference>
<dbReference type="Gene3D" id="1.10.150.240">
    <property type="entry name" value="Putative phosphatase, domain 2"/>
    <property type="match status" value="1"/>
</dbReference>
<dbReference type="HAMAP" id="MF_01250">
    <property type="entry name" value="Pyrophosphat_PpaX"/>
    <property type="match status" value="1"/>
</dbReference>
<dbReference type="InterPro" id="IPR050155">
    <property type="entry name" value="HAD-like_hydrolase_sf"/>
</dbReference>
<dbReference type="InterPro" id="IPR036412">
    <property type="entry name" value="HAD-like_sf"/>
</dbReference>
<dbReference type="InterPro" id="IPR006439">
    <property type="entry name" value="HAD-SF_hydro_IA"/>
</dbReference>
<dbReference type="InterPro" id="IPR041492">
    <property type="entry name" value="HAD_2"/>
</dbReference>
<dbReference type="InterPro" id="IPR023214">
    <property type="entry name" value="HAD_sf"/>
</dbReference>
<dbReference type="InterPro" id="IPR023198">
    <property type="entry name" value="PGP-like_dom2"/>
</dbReference>
<dbReference type="InterPro" id="IPR023733">
    <property type="entry name" value="Pyrophosphatase_Ppax"/>
</dbReference>
<dbReference type="NCBIfam" id="TIGR01549">
    <property type="entry name" value="HAD-SF-IA-v1"/>
    <property type="match status" value="1"/>
</dbReference>
<dbReference type="NCBIfam" id="TIGR01509">
    <property type="entry name" value="HAD-SF-IA-v3"/>
    <property type="match status" value="1"/>
</dbReference>
<dbReference type="NCBIfam" id="NF009804">
    <property type="entry name" value="PRK13288.1"/>
    <property type="match status" value="1"/>
</dbReference>
<dbReference type="PANTHER" id="PTHR43434">
    <property type="entry name" value="PHOSPHOGLYCOLATE PHOSPHATASE"/>
    <property type="match status" value="1"/>
</dbReference>
<dbReference type="PANTHER" id="PTHR43434:SF26">
    <property type="entry name" value="PYROPHOSPHATASE PPAX"/>
    <property type="match status" value="1"/>
</dbReference>
<dbReference type="Pfam" id="PF13419">
    <property type="entry name" value="HAD_2"/>
    <property type="match status" value="1"/>
</dbReference>
<dbReference type="SFLD" id="SFLDG01135">
    <property type="entry name" value="C1.5.6:_HAD__Beta-PGM__Phospha"/>
    <property type="match status" value="1"/>
</dbReference>
<dbReference type="SFLD" id="SFLDS00003">
    <property type="entry name" value="Haloacid_Dehalogenase"/>
    <property type="match status" value="1"/>
</dbReference>
<dbReference type="SUPFAM" id="SSF56784">
    <property type="entry name" value="HAD-like"/>
    <property type="match status" value="1"/>
</dbReference>
<sequence>MSIRTILFDLDGTLIDTNTLIKASFEHTFKEYNLNFSNEEILKFNGPPLVDTFNKIDETKADRMITTFREHNIREHDNFVTAFPHVYDTLEELQNRNISLGIVSTKMRHTVHMGLELTGISKFFSTIITYDDVTHAKPHPEPVQMAMQKLGAHPEHTLMVGDNHHDIVSGQRANVQTAAVAWSLKDTNYLKSFHPDYIIEDIKDIITIVGDSFA</sequence>
<feature type="chain" id="PRO_0000056844" description="Pyrophosphatase PpaX">
    <location>
        <begin position="1"/>
        <end position="214"/>
    </location>
</feature>
<feature type="active site" description="Nucleophile" evidence="1">
    <location>
        <position position="9"/>
    </location>
</feature>
<organism>
    <name type="scientific">Oceanobacillus iheyensis (strain DSM 14371 / CIP 107618 / JCM 11309 / KCTC 3954 / HTE831)</name>
    <dbReference type="NCBI Taxonomy" id="221109"/>
    <lineage>
        <taxon>Bacteria</taxon>
        <taxon>Bacillati</taxon>
        <taxon>Bacillota</taxon>
        <taxon>Bacilli</taxon>
        <taxon>Bacillales</taxon>
        <taxon>Bacillaceae</taxon>
        <taxon>Oceanobacillus</taxon>
    </lineage>
</organism>
<proteinExistence type="inferred from homology"/>
<comment type="function">
    <text evidence="1">Hydrolyzes pyrophosphate formed during P-Ser-HPr dephosphorylation by HPrK/P. Might play a role in controlling the intracellular pyrophosphate pool.</text>
</comment>
<comment type="catalytic activity">
    <reaction evidence="1">
        <text>diphosphate + H2O = 2 phosphate + H(+)</text>
        <dbReference type="Rhea" id="RHEA:24576"/>
        <dbReference type="ChEBI" id="CHEBI:15377"/>
        <dbReference type="ChEBI" id="CHEBI:15378"/>
        <dbReference type="ChEBI" id="CHEBI:33019"/>
        <dbReference type="ChEBI" id="CHEBI:43474"/>
        <dbReference type="EC" id="3.6.1.1"/>
    </reaction>
</comment>
<comment type="cofactor">
    <cofactor evidence="1">
        <name>Mg(2+)</name>
        <dbReference type="ChEBI" id="CHEBI:18420"/>
    </cofactor>
</comment>
<comment type="similarity">
    <text evidence="1">Belongs to the HAD-like hydrolase superfamily. PpaX family.</text>
</comment>
<reference key="1">
    <citation type="journal article" date="2002" name="Nucleic Acids Res.">
        <title>Genome sequence of Oceanobacillus iheyensis isolated from the Iheya Ridge and its unexpected adaptive capabilities to extreme environments.</title>
        <authorList>
            <person name="Takami H."/>
            <person name="Takaki Y."/>
            <person name="Uchiyama I."/>
        </authorList>
    </citation>
    <scope>NUCLEOTIDE SEQUENCE [LARGE SCALE GENOMIC DNA]</scope>
    <source>
        <strain>DSM 14371 / CIP 107618 / JCM 11309 / KCTC 3954 / HTE831</strain>
    </source>
</reference>
<keyword id="KW-0378">Hydrolase</keyword>
<keyword id="KW-0460">Magnesium</keyword>
<keyword id="KW-1185">Reference proteome</keyword>
<name>PPAX_OCEIH</name>
<gene>
    <name evidence="1" type="primary">ppaX</name>
    <name type="ordered locus">OB2479</name>
</gene>
<accession>Q8ENK3</accession>
<protein>
    <recommendedName>
        <fullName evidence="1">Pyrophosphatase PpaX</fullName>
        <ecNumber evidence="1">3.6.1.1</ecNumber>
    </recommendedName>
</protein>
<evidence type="ECO:0000255" key="1">
    <source>
        <dbReference type="HAMAP-Rule" id="MF_01250"/>
    </source>
</evidence>